<keyword id="KW-0007">Acetylation</keyword>
<keyword id="KW-0446">Lipid-binding</keyword>
<keyword id="KW-0496">Mitochondrion</keyword>
<keyword id="KW-1185">Reference proteome</keyword>
<keyword id="KW-0809">Transit peptide</keyword>
<keyword id="KW-0831">Ubiquinone biosynthesis</keyword>
<keyword id="KW-0832">Ubl conjugation</keyword>
<proteinExistence type="evidence at transcript level"/>
<reference key="1">
    <citation type="submission" date="2005-12" db="EMBL/GenBank/DDBJ databases">
        <authorList>
            <consortium name="NIH - Mammalian Gene Collection (MGC) project"/>
        </authorList>
    </citation>
    <scope>NUCLEOTIDE SEQUENCE [LARGE SCALE MRNA]</scope>
    <source>
        <strain>Crossbred X Angus</strain>
        <tissue>Liver</tissue>
    </source>
</reference>
<protein>
    <recommendedName>
        <fullName evidence="1">Ubiquinone biosynthesis protein COQ9, mitochondrial</fullName>
    </recommendedName>
</protein>
<sequence length="319" mass="35778">MAATVAFSGVLRRAGWRLLQLRCLPVPRCRPALAPRAFRASAMQLRSLDQQKDQPPPSSSQQQSEAQGAEEPNPEALRSPPRYTDQGGEEEEDYESEEQLQHRILTAALEFVPTHGWTAEAIAEGAQSLGLSSAAASMFGDDGSELILHFVTQCNARLTHVLEEEQKLVQLGQAEKKKTDKFLRDAVETRLRMLIPYIQHWPRAFSILMLPHNIPPSLNLLTSMVDDMWHYAGDQSTDFNWYTRRAVLAGIYNTTELVMMQDSSPDFEDTWRFLENRISDAMNMGHTAKQVKSTGEALVQGLMGAAVTLKNLTGLNQRR</sequence>
<comment type="function">
    <text evidence="1">Membrane-associated protein that warps the membrane surface to access and bind aromatic isoprenes with high specificity, including ubiquinone (CoQ) isoprene intermediates and presents them directly to COQ7, therefore facilitating the COQ7-mediated hydroxylase step. Participates in the biosynthesis of coenzyme Q, also named ubiquinone, an essential lipid-soluble electron transporter for aerobic cellular respiration.</text>
</comment>
<comment type="pathway">
    <text evidence="2">Cofactor biosynthesis; ubiquinone biosynthesis.</text>
</comment>
<comment type="subunit">
    <text evidence="1">Homodimer. Heterodimer; two heterodimers of COQ7:COQ9 come together on the same side of the lipid pseudo-bilayer and form a curved tetramer with a hydrophobic surface suitable for membrane interaction. These two tetramers assemble into a soluble octamer with a pseudo-bilayer of lipids captured within. Interacts with COQ7; this interaction allows ubiquinone (CoQ) isoprene intermediates presentation to COQ7 and facilitates the COQ7-mediated hydroxylase step.</text>
</comment>
<comment type="subcellular location">
    <subcellularLocation>
        <location evidence="2">Mitochondrion</location>
    </subcellularLocation>
    <text evidence="1">Associates with cardiolipin-rich membranes which leads to the lipid bilayer deformation and then accessing to membrane-bound lipids.</text>
</comment>
<comment type="domain">
    <text evidence="1">Structurally similar to the bacterial FadR protein (fatty acid metabolism regulator protein).</text>
</comment>
<comment type="PTM">
    <text evidence="1">In response to mitochondrial stress, the precursor protein is ubiquitinated by the SIFI complex in the cytoplasm before mitochondrial import, leading to its degradation. Within the SIFI complex, UBR4 initiates ubiquitin chain that are further elongated or branched by KCMF1.</text>
</comment>
<comment type="similarity">
    <text evidence="5">Belongs to the COQ9 family.</text>
</comment>
<name>COQ9_BOVIN</name>
<gene>
    <name evidence="1" type="primary">COQ9</name>
</gene>
<dbReference type="EMBL" id="BC111144">
    <property type="protein sequence ID" value="AAI11145.1"/>
    <property type="molecule type" value="mRNA"/>
</dbReference>
<dbReference type="RefSeq" id="NP_001039767.1">
    <property type="nucleotide sequence ID" value="NM_001046302.2"/>
</dbReference>
<dbReference type="SMR" id="Q2NL34"/>
<dbReference type="FunCoup" id="Q2NL34">
    <property type="interactions" value="2724"/>
</dbReference>
<dbReference type="STRING" id="9913.ENSBTAP00000002419"/>
<dbReference type="GlyGen" id="Q2NL34">
    <property type="glycosylation" value="1 site, 1 O-linked glycan (1 site)"/>
</dbReference>
<dbReference type="PaxDb" id="9913-ENSBTAP00000002419"/>
<dbReference type="PeptideAtlas" id="Q2NL34"/>
<dbReference type="GeneID" id="529282"/>
<dbReference type="KEGG" id="bta:529282"/>
<dbReference type="CTD" id="57017"/>
<dbReference type="VEuPathDB" id="HostDB:ENSBTAG00000001855"/>
<dbReference type="eggNOG" id="KOG2969">
    <property type="taxonomic scope" value="Eukaryota"/>
</dbReference>
<dbReference type="HOGENOM" id="CLU_057411_0_2_1"/>
<dbReference type="InParanoid" id="Q2NL34"/>
<dbReference type="OMA" id="CAGFGWN"/>
<dbReference type="OrthoDB" id="619536at2759"/>
<dbReference type="TreeFam" id="TF324653"/>
<dbReference type="Reactome" id="R-BTA-2142789">
    <property type="pathway name" value="Ubiquinol biosynthesis"/>
</dbReference>
<dbReference type="UniPathway" id="UPA00232"/>
<dbReference type="Proteomes" id="UP000009136">
    <property type="component" value="Chromosome 18"/>
</dbReference>
<dbReference type="Bgee" id="ENSBTAG00000001855">
    <property type="expression patterns" value="Expressed in corpus luteum and 105 other cell types or tissues"/>
</dbReference>
<dbReference type="GO" id="GO:0005743">
    <property type="term" value="C:mitochondrial inner membrane"/>
    <property type="evidence" value="ECO:0000318"/>
    <property type="project" value="GO_Central"/>
</dbReference>
<dbReference type="GO" id="GO:0019840">
    <property type="term" value="F:isoprenoid binding"/>
    <property type="evidence" value="ECO:0000250"/>
    <property type="project" value="UniProtKB"/>
</dbReference>
<dbReference type="GO" id="GO:0008289">
    <property type="term" value="F:lipid binding"/>
    <property type="evidence" value="ECO:0000250"/>
    <property type="project" value="UniProtKB"/>
</dbReference>
<dbReference type="GO" id="GO:0042803">
    <property type="term" value="F:protein homodimerization activity"/>
    <property type="evidence" value="ECO:0000250"/>
    <property type="project" value="UniProtKB"/>
</dbReference>
<dbReference type="GO" id="GO:0006744">
    <property type="term" value="P:ubiquinone biosynthetic process"/>
    <property type="evidence" value="ECO:0000250"/>
    <property type="project" value="UniProtKB"/>
</dbReference>
<dbReference type="FunFam" id="1.10.357.10:FF:000004">
    <property type="entry name" value="Ubiquinone biosynthesis protein COQ9, mitochondrial"/>
    <property type="match status" value="1"/>
</dbReference>
<dbReference type="Gene3D" id="1.10.357.10">
    <property type="entry name" value="Tetracycline Repressor, domain 2"/>
    <property type="match status" value="1"/>
</dbReference>
<dbReference type="InterPro" id="IPR013718">
    <property type="entry name" value="COQ9_C"/>
</dbReference>
<dbReference type="InterPro" id="IPR048674">
    <property type="entry name" value="COQ9_HTH"/>
</dbReference>
<dbReference type="InterPro" id="IPR012762">
    <property type="entry name" value="Ubiq_biosynth_COQ9"/>
</dbReference>
<dbReference type="NCBIfam" id="TIGR02396">
    <property type="entry name" value="diverge_rpsU"/>
    <property type="match status" value="1"/>
</dbReference>
<dbReference type="PANTHER" id="PTHR21427">
    <property type="entry name" value="UBIQUINONE BIOSYNTHESIS PROTEIN COQ9, MITOCHONDRIAL"/>
    <property type="match status" value="1"/>
</dbReference>
<dbReference type="PANTHER" id="PTHR21427:SF19">
    <property type="entry name" value="UBIQUINONE BIOSYNTHESIS PROTEIN COQ9, MITOCHONDRIAL"/>
    <property type="match status" value="1"/>
</dbReference>
<dbReference type="Pfam" id="PF08511">
    <property type="entry name" value="COQ9"/>
    <property type="match status" value="1"/>
</dbReference>
<dbReference type="Pfam" id="PF21392">
    <property type="entry name" value="COQ9_N"/>
    <property type="match status" value="1"/>
</dbReference>
<feature type="transit peptide" description="Mitochondrion" evidence="3">
    <location>
        <begin position="1"/>
        <end position="45"/>
    </location>
</feature>
<feature type="chain" id="PRO_0000228636" description="Ubiquinone biosynthesis protein COQ9, mitochondrial">
    <location>
        <begin position="46"/>
        <end position="319"/>
    </location>
</feature>
<feature type="region of interest" description="Disordered" evidence="4">
    <location>
        <begin position="46"/>
        <end position="99"/>
    </location>
</feature>
<feature type="short sequence motif" description="SIFI-degron" evidence="1">
    <location>
        <begin position="17"/>
        <end position="32"/>
    </location>
</feature>
<feature type="compositionally biased region" description="Acidic residues" evidence="4">
    <location>
        <begin position="87"/>
        <end position="98"/>
    </location>
</feature>
<feature type="binding site" evidence="1">
    <location>
        <position position="245"/>
    </location>
    <ligand>
        <name>a 1,2-diacylglycero-3-phosphoethanolamine</name>
        <dbReference type="ChEBI" id="CHEBI:57613"/>
    </ligand>
</feature>
<feature type="modified residue" description="N6-acetyllysine" evidence="2">
    <location>
        <position position="176"/>
    </location>
</feature>
<evidence type="ECO:0000250" key="1">
    <source>
        <dbReference type="UniProtKB" id="O75208"/>
    </source>
</evidence>
<evidence type="ECO:0000250" key="2">
    <source>
        <dbReference type="UniProtKB" id="Q8K1Z0"/>
    </source>
</evidence>
<evidence type="ECO:0000255" key="3"/>
<evidence type="ECO:0000256" key="4">
    <source>
        <dbReference type="SAM" id="MobiDB-lite"/>
    </source>
</evidence>
<evidence type="ECO:0000305" key="5"/>
<organism>
    <name type="scientific">Bos taurus</name>
    <name type="common">Bovine</name>
    <dbReference type="NCBI Taxonomy" id="9913"/>
    <lineage>
        <taxon>Eukaryota</taxon>
        <taxon>Metazoa</taxon>
        <taxon>Chordata</taxon>
        <taxon>Craniata</taxon>
        <taxon>Vertebrata</taxon>
        <taxon>Euteleostomi</taxon>
        <taxon>Mammalia</taxon>
        <taxon>Eutheria</taxon>
        <taxon>Laurasiatheria</taxon>
        <taxon>Artiodactyla</taxon>
        <taxon>Ruminantia</taxon>
        <taxon>Pecora</taxon>
        <taxon>Bovidae</taxon>
        <taxon>Bovinae</taxon>
        <taxon>Bos</taxon>
    </lineage>
</organism>
<accession>Q2NL34</accession>